<organism>
    <name type="scientific">Mycobacterium tuberculosis (strain CDC 1551 / Oshkosh)</name>
    <dbReference type="NCBI Taxonomy" id="83331"/>
    <lineage>
        <taxon>Bacteria</taxon>
        <taxon>Bacillati</taxon>
        <taxon>Actinomycetota</taxon>
        <taxon>Actinomycetes</taxon>
        <taxon>Mycobacteriales</taxon>
        <taxon>Mycobacteriaceae</taxon>
        <taxon>Mycobacterium</taxon>
        <taxon>Mycobacterium tuberculosis complex</taxon>
    </lineage>
</organism>
<name>ENO_MYCTO</name>
<feature type="chain" id="PRO_0000427108" description="Enolase">
    <location>
        <begin position="1"/>
        <end position="429"/>
    </location>
</feature>
<feature type="active site" description="Proton donor" evidence="1">
    <location>
        <position position="204"/>
    </location>
</feature>
<feature type="active site" description="Proton acceptor" evidence="1">
    <location>
        <position position="335"/>
    </location>
</feature>
<feature type="binding site" evidence="1">
    <location>
        <position position="162"/>
    </location>
    <ligand>
        <name>(2R)-2-phosphoglycerate</name>
        <dbReference type="ChEBI" id="CHEBI:58289"/>
    </ligand>
</feature>
<feature type="binding site" evidence="1">
    <location>
        <position position="241"/>
    </location>
    <ligand>
        <name>Mg(2+)</name>
        <dbReference type="ChEBI" id="CHEBI:18420"/>
    </ligand>
</feature>
<feature type="binding site" evidence="1">
    <location>
        <position position="283"/>
    </location>
    <ligand>
        <name>Mg(2+)</name>
        <dbReference type="ChEBI" id="CHEBI:18420"/>
    </ligand>
</feature>
<feature type="binding site" evidence="1">
    <location>
        <position position="310"/>
    </location>
    <ligand>
        <name>Mg(2+)</name>
        <dbReference type="ChEBI" id="CHEBI:18420"/>
    </ligand>
</feature>
<feature type="binding site" evidence="1">
    <location>
        <position position="335"/>
    </location>
    <ligand>
        <name>(2R)-2-phosphoglycerate</name>
        <dbReference type="ChEBI" id="CHEBI:58289"/>
    </ligand>
</feature>
<feature type="binding site" evidence="1">
    <location>
        <position position="364"/>
    </location>
    <ligand>
        <name>(2R)-2-phosphoglycerate</name>
        <dbReference type="ChEBI" id="CHEBI:58289"/>
    </ligand>
</feature>
<feature type="binding site" evidence="1">
    <location>
        <position position="365"/>
    </location>
    <ligand>
        <name>(2R)-2-phosphoglycerate</name>
        <dbReference type="ChEBI" id="CHEBI:58289"/>
    </ligand>
</feature>
<feature type="binding site" evidence="1">
    <location>
        <position position="386"/>
    </location>
    <ligand>
        <name>(2R)-2-phosphoglycerate</name>
        <dbReference type="ChEBI" id="CHEBI:58289"/>
    </ligand>
</feature>
<protein>
    <recommendedName>
        <fullName evidence="1">Enolase</fullName>
        <ecNumber evidence="1">4.2.1.11</ecNumber>
    </recommendedName>
    <alternativeName>
        <fullName evidence="1">2-phospho-D-glycerate hydro-lyase</fullName>
    </alternativeName>
    <alternativeName>
        <fullName evidence="1">2-phosphoglycerate dehydratase</fullName>
    </alternativeName>
</protein>
<keyword id="KW-0963">Cytoplasm</keyword>
<keyword id="KW-0324">Glycolysis</keyword>
<keyword id="KW-0456">Lyase</keyword>
<keyword id="KW-0460">Magnesium</keyword>
<keyword id="KW-0479">Metal-binding</keyword>
<keyword id="KW-1185">Reference proteome</keyword>
<keyword id="KW-0964">Secreted</keyword>
<accession>P9WNL0</accession>
<accession>L0T876</accession>
<accession>P96377</accession>
<proteinExistence type="inferred from homology"/>
<gene>
    <name evidence="1" type="primary">eno</name>
    <name type="ordered locus">MT1051</name>
</gene>
<dbReference type="EC" id="4.2.1.11" evidence="1"/>
<dbReference type="EMBL" id="AE000516">
    <property type="protein sequence ID" value="AAK45302.1"/>
    <property type="molecule type" value="Genomic_DNA"/>
</dbReference>
<dbReference type="PIR" id="B70623">
    <property type="entry name" value="B70623"/>
</dbReference>
<dbReference type="RefSeq" id="WP_003898693.1">
    <property type="nucleotide sequence ID" value="NZ_KK341227.1"/>
</dbReference>
<dbReference type="SMR" id="P9WNL0"/>
<dbReference type="KEGG" id="mtc:MT1051"/>
<dbReference type="PATRIC" id="fig|83331.31.peg.1128"/>
<dbReference type="HOGENOM" id="CLU_031223_0_1_11"/>
<dbReference type="UniPathway" id="UPA00109">
    <property type="reaction ID" value="UER00187"/>
</dbReference>
<dbReference type="Proteomes" id="UP000001020">
    <property type="component" value="Chromosome"/>
</dbReference>
<dbReference type="GO" id="GO:0009986">
    <property type="term" value="C:cell surface"/>
    <property type="evidence" value="ECO:0007669"/>
    <property type="project" value="UniProtKB-SubCell"/>
</dbReference>
<dbReference type="GO" id="GO:0005576">
    <property type="term" value="C:extracellular region"/>
    <property type="evidence" value="ECO:0007669"/>
    <property type="project" value="UniProtKB-SubCell"/>
</dbReference>
<dbReference type="GO" id="GO:0000015">
    <property type="term" value="C:phosphopyruvate hydratase complex"/>
    <property type="evidence" value="ECO:0007669"/>
    <property type="project" value="InterPro"/>
</dbReference>
<dbReference type="GO" id="GO:0000287">
    <property type="term" value="F:magnesium ion binding"/>
    <property type="evidence" value="ECO:0007669"/>
    <property type="project" value="UniProtKB-UniRule"/>
</dbReference>
<dbReference type="GO" id="GO:0004634">
    <property type="term" value="F:phosphopyruvate hydratase activity"/>
    <property type="evidence" value="ECO:0007669"/>
    <property type="project" value="UniProtKB-UniRule"/>
</dbReference>
<dbReference type="GO" id="GO:0006096">
    <property type="term" value="P:glycolytic process"/>
    <property type="evidence" value="ECO:0007669"/>
    <property type="project" value="UniProtKB-UniRule"/>
</dbReference>
<dbReference type="CDD" id="cd03313">
    <property type="entry name" value="enolase"/>
    <property type="match status" value="1"/>
</dbReference>
<dbReference type="FunFam" id="3.20.20.120:FF:000001">
    <property type="entry name" value="Enolase"/>
    <property type="match status" value="1"/>
</dbReference>
<dbReference type="FunFam" id="3.30.390.10:FF:000001">
    <property type="entry name" value="Enolase"/>
    <property type="match status" value="1"/>
</dbReference>
<dbReference type="Gene3D" id="3.20.20.120">
    <property type="entry name" value="Enolase-like C-terminal domain"/>
    <property type="match status" value="1"/>
</dbReference>
<dbReference type="Gene3D" id="3.30.390.10">
    <property type="entry name" value="Enolase-like, N-terminal domain"/>
    <property type="match status" value="1"/>
</dbReference>
<dbReference type="HAMAP" id="MF_00318">
    <property type="entry name" value="Enolase"/>
    <property type="match status" value="1"/>
</dbReference>
<dbReference type="InterPro" id="IPR000941">
    <property type="entry name" value="Enolase"/>
</dbReference>
<dbReference type="InterPro" id="IPR036849">
    <property type="entry name" value="Enolase-like_C_sf"/>
</dbReference>
<dbReference type="InterPro" id="IPR029017">
    <property type="entry name" value="Enolase-like_N"/>
</dbReference>
<dbReference type="InterPro" id="IPR020810">
    <property type="entry name" value="Enolase_C"/>
</dbReference>
<dbReference type="InterPro" id="IPR020809">
    <property type="entry name" value="Enolase_CS"/>
</dbReference>
<dbReference type="InterPro" id="IPR020811">
    <property type="entry name" value="Enolase_N"/>
</dbReference>
<dbReference type="NCBIfam" id="TIGR01060">
    <property type="entry name" value="eno"/>
    <property type="match status" value="1"/>
</dbReference>
<dbReference type="PANTHER" id="PTHR11902">
    <property type="entry name" value="ENOLASE"/>
    <property type="match status" value="1"/>
</dbReference>
<dbReference type="PANTHER" id="PTHR11902:SF1">
    <property type="entry name" value="ENOLASE"/>
    <property type="match status" value="1"/>
</dbReference>
<dbReference type="Pfam" id="PF00113">
    <property type="entry name" value="Enolase_C"/>
    <property type="match status" value="1"/>
</dbReference>
<dbReference type="Pfam" id="PF03952">
    <property type="entry name" value="Enolase_N"/>
    <property type="match status" value="1"/>
</dbReference>
<dbReference type="PIRSF" id="PIRSF001400">
    <property type="entry name" value="Enolase"/>
    <property type="match status" value="1"/>
</dbReference>
<dbReference type="PRINTS" id="PR00148">
    <property type="entry name" value="ENOLASE"/>
</dbReference>
<dbReference type="SFLD" id="SFLDS00001">
    <property type="entry name" value="Enolase"/>
    <property type="match status" value="1"/>
</dbReference>
<dbReference type="SFLD" id="SFLDF00002">
    <property type="entry name" value="enolase"/>
    <property type="match status" value="1"/>
</dbReference>
<dbReference type="SMART" id="SM01192">
    <property type="entry name" value="Enolase_C"/>
    <property type="match status" value="1"/>
</dbReference>
<dbReference type="SMART" id="SM01193">
    <property type="entry name" value="Enolase_N"/>
    <property type="match status" value="1"/>
</dbReference>
<dbReference type="SUPFAM" id="SSF51604">
    <property type="entry name" value="Enolase C-terminal domain-like"/>
    <property type="match status" value="1"/>
</dbReference>
<dbReference type="SUPFAM" id="SSF54826">
    <property type="entry name" value="Enolase N-terminal domain-like"/>
    <property type="match status" value="1"/>
</dbReference>
<dbReference type="PROSITE" id="PS00164">
    <property type="entry name" value="ENOLASE"/>
    <property type="match status" value="1"/>
</dbReference>
<evidence type="ECO:0000255" key="1">
    <source>
        <dbReference type="HAMAP-Rule" id="MF_00318"/>
    </source>
</evidence>
<reference key="1">
    <citation type="journal article" date="2002" name="J. Bacteriol.">
        <title>Whole-genome comparison of Mycobacterium tuberculosis clinical and laboratory strains.</title>
        <authorList>
            <person name="Fleischmann R.D."/>
            <person name="Alland D."/>
            <person name="Eisen J.A."/>
            <person name="Carpenter L."/>
            <person name="White O."/>
            <person name="Peterson J.D."/>
            <person name="DeBoy R.T."/>
            <person name="Dodson R.J."/>
            <person name="Gwinn M.L."/>
            <person name="Haft D.H."/>
            <person name="Hickey E.K."/>
            <person name="Kolonay J.F."/>
            <person name="Nelson W.C."/>
            <person name="Umayam L.A."/>
            <person name="Ermolaeva M.D."/>
            <person name="Salzberg S.L."/>
            <person name="Delcher A."/>
            <person name="Utterback T.R."/>
            <person name="Weidman J.F."/>
            <person name="Khouri H.M."/>
            <person name="Gill J."/>
            <person name="Mikula A."/>
            <person name="Bishai W."/>
            <person name="Jacobs W.R. Jr."/>
            <person name="Venter J.C."/>
            <person name="Fraser C.M."/>
        </authorList>
    </citation>
    <scope>NUCLEOTIDE SEQUENCE [LARGE SCALE GENOMIC DNA]</scope>
    <source>
        <strain>CDC 1551 / Oshkosh</strain>
    </source>
</reference>
<sequence>MPIIEQVRAREILDSRGNPTVEVEVALIDGTFARAAVPSGASTGEHEAVELRDGGDRYGGKGVQKAVQAVLDEIGPAVIGLNADDQRLVDQALVDLDGTPDKSRLGGNAILGVSLAVAKAAADSAELPLFRYVGGPNAHILPVPMMNILNGGAHADTAVDIQEFMVAPIGAPSFVEALRWGAEVYHALKSVLKKEGLSTGLGDEGGFAPDVAGTTAALDLISRAIESAGLRPGADVALALDAAATEFFTDGTGYVFEGTTRTADQMTEFYAGLLGAYPLVSIEDPLSEDDWDGWAALTASIGDRVQIVGDDIFVTNPERLEEGIERGVANALLVKVNQIGTLTETLDAVTLAHHGGYRTMISHRSGETEDTMIADLAVAIGSGQIKTGAPARSERVAKYNQLLRIEEALGDAARYAGDLAFPRFACETK</sequence>
<comment type="function">
    <text evidence="1">Catalyzes the reversible conversion of 2-phosphoglycerate (2-PG) into phosphoenolpyruvate (PEP). It is essential for the degradation of carbohydrates via glycolysis.</text>
</comment>
<comment type="catalytic activity">
    <reaction evidence="1">
        <text>(2R)-2-phosphoglycerate = phosphoenolpyruvate + H2O</text>
        <dbReference type="Rhea" id="RHEA:10164"/>
        <dbReference type="ChEBI" id="CHEBI:15377"/>
        <dbReference type="ChEBI" id="CHEBI:58289"/>
        <dbReference type="ChEBI" id="CHEBI:58702"/>
        <dbReference type="EC" id="4.2.1.11"/>
    </reaction>
</comment>
<comment type="cofactor">
    <cofactor evidence="1">
        <name>Mg(2+)</name>
        <dbReference type="ChEBI" id="CHEBI:18420"/>
    </cofactor>
    <text evidence="1">Binds a second Mg(2+) ion via substrate during catalysis.</text>
</comment>
<comment type="pathway">
    <text evidence="1">Carbohydrate degradation; glycolysis; pyruvate from D-glyceraldehyde 3-phosphate: step 4/5.</text>
</comment>
<comment type="subcellular location">
    <subcellularLocation>
        <location evidence="1">Cytoplasm</location>
    </subcellularLocation>
    <subcellularLocation>
        <location evidence="1">Secreted</location>
    </subcellularLocation>
    <subcellularLocation>
        <location evidence="1">Cell surface</location>
    </subcellularLocation>
    <text evidence="1">Fractions of enolase are present in both the cytoplasm and on the cell surface.</text>
</comment>
<comment type="similarity">
    <text evidence="1">Belongs to the enolase family.</text>
</comment>